<comment type="subcellular location">
    <subcellularLocation>
        <location evidence="1">Secreted</location>
    </subcellularLocation>
</comment>
<comment type="similarity">
    <text evidence="3">Belongs to the DEFL family.</text>
</comment>
<feature type="signal peptide" evidence="2">
    <location>
        <begin position="1"/>
        <end position="25"/>
    </location>
</feature>
<feature type="chain" id="PRO_0000017292" description="Defensin-like protein 125">
    <location>
        <begin position="26"/>
        <end position="76"/>
    </location>
</feature>
<feature type="disulfide bond" evidence="1">
    <location>
        <begin position="30"/>
        <end position="74"/>
    </location>
</feature>
<feature type="disulfide bond" evidence="1">
    <location>
        <begin position="41"/>
        <end position="60"/>
    </location>
</feature>
<feature type="disulfide bond" evidence="1">
    <location>
        <begin position="46"/>
        <end position="68"/>
    </location>
</feature>
<feature type="disulfide bond" evidence="1">
    <location>
        <begin position="50"/>
        <end position="70"/>
    </location>
</feature>
<accession>P82768</accession>
<organism evidence="3">
    <name type="scientific">Arabidopsis thaliana</name>
    <name type="common">Mouse-ear cress</name>
    <dbReference type="NCBI Taxonomy" id="3702"/>
    <lineage>
        <taxon>Eukaryota</taxon>
        <taxon>Viridiplantae</taxon>
        <taxon>Streptophyta</taxon>
        <taxon>Embryophyta</taxon>
        <taxon>Tracheophyta</taxon>
        <taxon>Spermatophyta</taxon>
        <taxon>Magnoliopsida</taxon>
        <taxon>eudicotyledons</taxon>
        <taxon>Gunneridae</taxon>
        <taxon>Pentapetalae</taxon>
        <taxon>rosids</taxon>
        <taxon>malvids</taxon>
        <taxon>Brassicales</taxon>
        <taxon>Brassicaceae</taxon>
        <taxon>Camelineae</taxon>
        <taxon>Arabidopsis</taxon>
    </lineage>
</organism>
<gene>
    <name type="primary">LCR54</name>
    <name type="ordered locus">At3g61182</name>
    <name type="ORF">T20K12</name>
</gene>
<keyword id="KW-0929">Antimicrobial</keyword>
<keyword id="KW-1015">Disulfide bond</keyword>
<keyword id="KW-0295">Fungicide</keyword>
<keyword id="KW-0611">Plant defense</keyword>
<keyword id="KW-1185">Reference proteome</keyword>
<keyword id="KW-0964">Secreted</keyword>
<keyword id="KW-0732">Signal</keyword>
<dbReference type="EMBL" id="AL137898">
    <property type="status" value="NOT_ANNOTATED_CDS"/>
    <property type="molecule type" value="Genomic_DNA"/>
</dbReference>
<dbReference type="EMBL" id="CP002686">
    <property type="protein sequence ID" value="AEE80169.1"/>
    <property type="molecule type" value="Genomic_DNA"/>
</dbReference>
<dbReference type="RefSeq" id="NP_001030912.1">
    <property type="nucleotide sequence ID" value="NM_001035835.5"/>
</dbReference>
<dbReference type="SMR" id="P82768"/>
<dbReference type="PaxDb" id="3702-AT3G61182.1"/>
<dbReference type="EnsemblPlants" id="AT3G61182.1">
    <property type="protein sequence ID" value="AT3G61182.1"/>
    <property type="gene ID" value="AT3G61182"/>
</dbReference>
<dbReference type="GeneID" id="3769758"/>
<dbReference type="Gramene" id="AT3G61182.1">
    <property type="protein sequence ID" value="AT3G61182.1"/>
    <property type="gene ID" value="AT3G61182"/>
</dbReference>
<dbReference type="KEGG" id="ath:AT3G61182"/>
<dbReference type="Araport" id="AT3G61182"/>
<dbReference type="TAIR" id="AT3G61182">
    <property type="gene designation" value="LCR54"/>
</dbReference>
<dbReference type="HOGENOM" id="CLU_182511_2_0_1"/>
<dbReference type="InParanoid" id="P82768"/>
<dbReference type="OMA" id="PQENCEG"/>
<dbReference type="PhylomeDB" id="P82768"/>
<dbReference type="PRO" id="PR:P82768"/>
<dbReference type="Proteomes" id="UP000006548">
    <property type="component" value="Chromosome 3"/>
</dbReference>
<dbReference type="ExpressionAtlas" id="P82768">
    <property type="expression patterns" value="baseline and differential"/>
</dbReference>
<dbReference type="GO" id="GO:0005576">
    <property type="term" value="C:extracellular region"/>
    <property type="evidence" value="ECO:0007669"/>
    <property type="project" value="UniProtKB-SubCell"/>
</dbReference>
<dbReference type="GO" id="GO:0050832">
    <property type="term" value="P:defense response to fungus"/>
    <property type="evidence" value="ECO:0007669"/>
    <property type="project" value="UniProtKB-KW"/>
</dbReference>
<dbReference type="GO" id="GO:0031640">
    <property type="term" value="P:killing of cells of another organism"/>
    <property type="evidence" value="ECO:0007669"/>
    <property type="project" value="UniProtKB-KW"/>
</dbReference>
<dbReference type="InterPro" id="IPR010851">
    <property type="entry name" value="DEFL"/>
</dbReference>
<dbReference type="PANTHER" id="PTHR33830:SF10">
    <property type="entry name" value="DEFENSIN-LIKE PROTEIN 122-RELATED"/>
    <property type="match status" value="1"/>
</dbReference>
<dbReference type="PANTHER" id="PTHR33830">
    <property type="entry name" value="DEFENSIN-LIKE PROTEIN 184-RELATED"/>
    <property type="match status" value="1"/>
</dbReference>
<dbReference type="Pfam" id="PF07333">
    <property type="entry name" value="SLR1-BP"/>
    <property type="match status" value="1"/>
</dbReference>
<sequence>MTKAITLAIFMVVLVLGMVTKETQGEEKQCYDYLLTPQENCEGLICAHECTMQHGGNGVCVDTTSTVCICTYDCTS</sequence>
<proteinExistence type="evidence at transcript level"/>
<reference evidence="3" key="1">
    <citation type="journal article" date="2000" name="Nature">
        <title>Sequence and analysis of chromosome 3 of the plant Arabidopsis thaliana.</title>
        <authorList>
            <person name="Salanoubat M."/>
            <person name="Lemcke K."/>
            <person name="Rieger M."/>
            <person name="Ansorge W."/>
            <person name="Unseld M."/>
            <person name="Fartmann B."/>
            <person name="Valle G."/>
            <person name="Bloecker H."/>
            <person name="Perez-Alonso M."/>
            <person name="Obermaier B."/>
            <person name="Delseny M."/>
            <person name="Boutry M."/>
            <person name="Grivell L.A."/>
            <person name="Mache R."/>
            <person name="Puigdomenech P."/>
            <person name="De Simone V."/>
            <person name="Choisne N."/>
            <person name="Artiguenave F."/>
            <person name="Robert C."/>
            <person name="Brottier P."/>
            <person name="Wincker P."/>
            <person name="Cattolico L."/>
            <person name="Weissenbach J."/>
            <person name="Saurin W."/>
            <person name="Quetier F."/>
            <person name="Schaefer M."/>
            <person name="Mueller-Auer S."/>
            <person name="Gabel C."/>
            <person name="Fuchs M."/>
            <person name="Benes V."/>
            <person name="Wurmbach E."/>
            <person name="Drzonek H."/>
            <person name="Erfle H."/>
            <person name="Jordan N."/>
            <person name="Bangert S."/>
            <person name="Wiedelmann R."/>
            <person name="Kranz H."/>
            <person name="Voss H."/>
            <person name="Holland R."/>
            <person name="Brandt P."/>
            <person name="Nyakatura G."/>
            <person name="Vezzi A."/>
            <person name="D'Angelo M."/>
            <person name="Pallavicini A."/>
            <person name="Toppo S."/>
            <person name="Simionati B."/>
            <person name="Conrad A."/>
            <person name="Hornischer K."/>
            <person name="Kauer G."/>
            <person name="Loehnert T.-H."/>
            <person name="Nordsiek G."/>
            <person name="Reichelt J."/>
            <person name="Scharfe M."/>
            <person name="Schoen O."/>
            <person name="Bargues M."/>
            <person name="Terol J."/>
            <person name="Climent J."/>
            <person name="Navarro P."/>
            <person name="Collado C."/>
            <person name="Perez-Perez A."/>
            <person name="Ottenwaelder B."/>
            <person name="Duchemin D."/>
            <person name="Cooke R."/>
            <person name="Laudie M."/>
            <person name="Berger-Llauro C."/>
            <person name="Purnelle B."/>
            <person name="Masuy D."/>
            <person name="de Haan M."/>
            <person name="Maarse A.C."/>
            <person name="Alcaraz J.-P."/>
            <person name="Cottet A."/>
            <person name="Casacuberta E."/>
            <person name="Monfort A."/>
            <person name="Argiriou A."/>
            <person name="Flores M."/>
            <person name="Liguori R."/>
            <person name="Vitale D."/>
            <person name="Mannhaupt G."/>
            <person name="Haase D."/>
            <person name="Schoof H."/>
            <person name="Rudd S."/>
            <person name="Zaccaria P."/>
            <person name="Mewes H.-W."/>
            <person name="Mayer K.F.X."/>
            <person name="Kaul S."/>
            <person name="Town C.D."/>
            <person name="Koo H.L."/>
            <person name="Tallon L.J."/>
            <person name="Jenkins J."/>
            <person name="Rooney T."/>
            <person name="Rizzo M."/>
            <person name="Walts A."/>
            <person name="Utterback T."/>
            <person name="Fujii C.Y."/>
            <person name="Shea T.P."/>
            <person name="Creasy T.H."/>
            <person name="Haas B."/>
            <person name="Maiti R."/>
            <person name="Wu D."/>
            <person name="Peterson J."/>
            <person name="Van Aken S."/>
            <person name="Pai G."/>
            <person name="Militscher J."/>
            <person name="Sellers P."/>
            <person name="Gill J.E."/>
            <person name="Feldblyum T.V."/>
            <person name="Preuss D."/>
            <person name="Lin X."/>
            <person name="Nierman W.C."/>
            <person name="Salzberg S.L."/>
            <person name="White O."/>
            <person name="Venter J.C."/>
            <person name="Fraser C.M."/>
            <person name="Kaneko T."/>
            <person name="Nakamura Y."/>
            <person name="Sato S."/>
            <person name="Kato T."/>
            <person name="Asamizu E."/>
            <person name="Sasamoto S."/>
            <person name="Kimura T."/>
            <person name="Idesawa K."/>
            <person name="Kawashima K."/>
            <person name="Kishida Y."/>
            <person name="Kiyokawa C."/>
            <person name="Kohara M."/>
            <person name="Matsumoto M."/>
            <person name="Matsuno A."/>
            <person name="Muraki A."/>
            <person name="Nakayama S."/>
            <person name="Nakazaki N."/>
            <person name="Shinpo S."/>
            <person name="Takeuchi C."/>
            <person name="Wada T."/>
            <person name="Watanabe A."/>
            <person name="Yamada M."/>
            <person name="Yasuda M."/>
            <person name="Tabata S."/>
        </authorList>
    </citation>
    <scope>NUCLEOTIDE SEQUENCE [LARGE SCALE GENOMIC DNA]</scope>
    <source>
        <strain>cv. Columbia</strain>
    </source>
</reference>
<reference key="2">
    <citation type="journal article" date="2017" name="Plant J.">
        <title>Araport11: a complete reannotation of the Arabidopsis thaliana reference genome.</title>
        <authorList>
            <person name="Cheng C.Y."/>
            <person name="Krishnakumar V."/>
            <person name="Chan A.P."/>
            <person name="Thibaud-Nissen F."/>
            <person name="Schobel S."/>
            <person name="Town C.D."/>
        </authorList>
    </citation>
    <scope>GENOME REANNOTATION</scope>
    <source>
        <strain>cv. Columbia</strain>
    </source>
</reference>
<reference evidence="3" key="3">
    <citation type="journal article" date="2001" name="Plant Mol. Biol.">
        <title>Two large Arabidopsis thaliana gene families are homologous to the Brassica gene superfamily that encodes pollen coat proteins and the male component of the self-incompatibility response.</title>
        <authorList>
            <person name="Vanoosthuyse V."/>
            <person name="Miege C."/>
            <person name="Dumas C."/>
            <person name="Cock J.M."/>
        </authorList>
    </citation>
    <scope>IDENTIFICATION</scope>
</reference>
<reference key="4">
    <citation type="journal article" date="2005" name="Plant Physiol.">
        <title>Genome organization of more than 300 defensin-like genes in Arabidopsis.</title>
        <authorList>
            <person name="Silverstein K.A.T."/>
            <person name="Graham M.A."/>
            <person name="Paape T.D."/>
            <person name="VandenBosch K.A."/>
        </authorList>
    </citation>
    <scope>GENE FAMILY</scope>
</reference>
<name>DF125_ARATH</name>
<evidence type="ECO:0000250" key="1"/>
<evidence type="ECO:0000255" key="2"/>
<evidence type="ECO:0000305" key="3"/>
<protein>
    <recommendedName>
        <fullName>Defensin-like protein 125</fullName>
    </recommendedName>
    <alternativeName>
        <fullName>Low-molecular-weight cysteine-rich protein 54</fullName>
        <shortName>Protein LCR54</shortName>
    </alternativeName>
</protein>